<organism>
    <name type="scientific">Homo sapiens</name>
    <name type="common">Human</name>
    <dbReference type="NCBI Taxonomy" id="9606"/>
    <lineage>
        <taxon>Eukaryota</taxon>
        <taxon>Metazoa</taxon>
        <taxon>Chordata</taxon>
        <taxon>Craniata</taxon>
        <taxon>Vertebrata</taxon>
        <taxon>Euteleostomi</taxon>
        <taxon>Mammalia</taxon>
        <taxon>Eutheria</taxon>
        <taxon>Euarchontoglires</taxon>
        <taxon>Primates</taxon>
        <taxon>Haplorrhini</taxon>
        <taxon>Catarrhini</taxon>
        <taxon>Hominidae</taxon>
        <taxon>Homo</taxon>
    </lineage>
</organism>
<reference key="1">
    <citation type="journal article" date="1999" name="Electrophoresis">
        <title>Identification of true differentially expressed mRNAs in a pair of human bladder transitional cell carcinomas using an improved differential display procedure.</title>
        <authorList>
            <person name="Gromova I."/>
            <person name="Gromov P."/>
            <person name="Celis J.E."/>
        </authorList>
    </citation>
    <scope>NUCLEOTIDE SEQUENCE [MRNA]</scope>
    <source>
        <tissue>Urinary bladder</tissue>
    </source>
</reference>
<reference key="2">
    <citation type="journal article" date="2001" name="Nature">
        <title>The DNA sequence and comparative analysis of human chromosome 20.</title>
        <authorList>
            <person name="Deloukas P."/>
            <person name="Matthews L.H."/>
            <person name="Ashurst J.L."/>
            <person name="Burton J."/>
            <person name="Gilbert J.G.R."/>
            <person name="Jones M."/>
            <person name="Stavrides G."/>
            <person name="Almeida J.P."/>
            <person name="Babbage A.K."/>
            <person name="Bagguley C.L."/>
            <person name="Bailey J."/>
            <person name="Barlow K.F."/>
            <person name="Bates K.N."/>
            <person name="Beard L.M."/>
            <person name="Beare D.M."/>
            <person name="Beasley O.P."/>
            <person name="Bird C.P."/>
            <person name="Blakey S.E."/>
            <person name="Bridgeman A.M."/>
            <person name="Brown A.J."/>
            <person name="Buck D."/>
            <person name="Burrill W.D."/>
            <person name="Butler A.P."/>
            <person name="Carder C."/>
            <person name="Carter N.P."/>
            <person name="Chapman J.C."/>
            <person name="Clamp M."/>
            <person name="Clark G."/>
            <person name="Clark L.N."/>
            <person name="Clark S.Y."/>
            <person name="Clee C.M."/>
            <person name="Clegg S."/>
            <person name="Cobley V.E."/>
            <person name="Collier R.E."/>
            <person name="Connor R.E."/>
            <person name="Corby N.R."/>
            <person name="Coulson A."/>
            <person name="Coville G.J."/>
            <person name="Deadman R."/>
            <person name="Dhami P.D."/>
            <person name="Dunn M."/>
            <person name="Ellington A.G."/>
            <person name="Frankland J.A."/>
            <person name="Fraser A."/>
            <person name="French L."/>
            <person name="Garner P."/>
            <person name="Grafham D.V."/>
            <person name="Griffiths C."/>
            <person name="Griffiths M.N.D."/>
            <person name="Gwilliam R."/>
            <person name="Hall R.E."/>
            <person name="Hammond S."/>
            <person name="Harley J.L."/>
            <person name="Heath P.D."/>
            <person name="Ho S."/>
            <person name="Holden J.L."/>
            <person name="Howden P.J."/>
            <person name="Huckle E."/>
            <person name="Hunt A.R."/>
            <person name="Hunt S.E."/>
            <person name="Jekosch K."/>
            <person name="Johnson C.M."/>
            <person name="Johnson D."/>
            <person name="Kay M.P."/>
            <person name="Kimberley A.M."/>
            <person name="King A."/>
            <person name="Knights A."/>
            <person name="Laird G.K."/>
            <person name="Lawlor S."/>
            <person name="Lehvaeslaiho M.H."/>
            <person name="Leversha M.A."/>
            <person name="Lloyd C."/>
            <person name="Lloyd D.M."/>
            <person name="Lovell J.D."/>
            <person name="Marsh V.L."/>
            <person name="Martin S.L."/>
            <person name="McConnachie L.J."/>
            <person name="McLay K."/>
            <person name="McMurray A.A."/>
            <person name="Milne S.A."/>
            <person name="Mistry D."/>
            <person name="Moore M.J.F."/>
            <person name="Mullikin J.C."/>
            <person name="Nickerson T."/>
            <person name="Oliver K."/>
            <person name="Parker A."/>
            <person name="Patel R."/>
            <person name="Pearce T.A.V."/>
            <person name="Peck A.I."/>
            <person name="Phillimore B.J.C.T."/>
            <person name="Prathalingam S.R."/>
            <person name="Plumb R.W."/>
            <person name="Ramsay H."/>
            <person name="Rice C.M."/>
            <person name="Ross M.T."/>
            <person name="Scott C.E."/>
            <person name="Sehra H.K."/>
            <person name="Shownkeen R."/>
            <person name="Sims S."/>
            <person name="Skuce C.D."/>
            <person name="Smith M.L."/>
            <person name="Soderlund C."/>
            <person name="Steward C.A."/>
            <person name="Sulston J.E."/>
            <person name="Swann R.M."/>
            <person name="Sycamore N."/>
            <person name="Taylor R."/>
            <person name="Tee L."/>
            <person name="Thomas D.W."/>
            <person name="Thorpe A."/>
            <person name="Tracey A."/>
            <person name="Tromans A.C."/>
            <person name="Vaudin M."/>
            <person name="Wall M."/>
            <person name="Wallis J.M."/>
            <person name="Whitehead S.L."/>
            <person name="Whittaker P."/>
            <person name="Willey D.L."/>
            <person name="Williams L."/>
            <person name="Williams S.A."/>
            <person name="Wilming L."/>
            <person name="Wray P.W."/>
            <person name="Hubbard T."/>
            <person name="Durbin R.M."/>
            <person name="Bentley D.R."/>
            <person name="Beck S."/>
            <person name="Rogers J."/>
        </authorList>
    </citation>
    <scope>NUCLEOTIDE SEQUENCE [LARGE SCALE GENOMIC DNA]</scope>
</reference>
<reference key="3">
    <citation type="journal article" date="2004" name="Genome Res.">
        <title>The status, quality, and expansion of the NIH full-length cDNA project: the Mammalian Gene Collection (MGC).</title>
        <authorList>
            <consortium name="The MGC Project Team"/>
        </authorList>
    </citation>
    <scope>NUCLEOTIDE SEQUENCE [LARGE SCALE MRNA]</scope>
    <source>
        <tissue>Colon</tissue>
        <tissue>Lung</tissue>
    </source>
</reference>
<reference key="4">
    <citation type="journal article" date="2000" name="Int. J. Cancer">
        <title>Novel association of a diverse range of genes with renal cell carcinoma as identified by differential display.</title>
        <authorList>
            <person name="Rae F.K."/>
            <person name="Stephenson S.A."/>
            <person name="Nicol D.L."/>
            <person name="Clements J.A."/>
        </authorList>
    </citation>
    <scope>TISSUE SPECIFICITY</scope>
</reference>
<reference key="5">
    <citation type="journal article" date="2006" name="Tumor Biol.">
        <title>Functional analysis of bladder cancer-related protein gene: a putative cervical cancer tumor suppressor gene in cervical carcinoma.</title>
        <authorList>
            <person name="Zuo Z."/>
            <person name="Zhao M."/>
            <person name="Liu J."/>
            <person name="Gao G."/>
            <person name="Wu X."/>
        </authorList>
    </citation>
    <scope>FUNCTION</scope>
    <scope>TISSUE SPECIFICITY</scope>
</reference>
<reference key="6">
    <citation type="journal article" date="2007" name="Mol. Cell. Biochem.">
        <title>Overexpression of BLCAP induces S phase arrest and apoptosis independent of p53 and NF-kappaB in human tongue carcinoma: BLCAP overexpression induces S phase arrest and apoptosis.</title>
        <authorList>
            <person name="Yao J."/>
            <person name="Duan L."/>
            <person name="Fan M."/>
            <person name="Yuan J."/>
            <person name="Wu X."/>
        </authorList>
    </citation>
    <scope>FUNCTION</scope>
</reference>
<reference key="7">
    <citation type="journal article" date="2010" name="Int. J. Cancer">
        <title>Human BLCAP transcript: new editing events in normal and cancerous tissues.</title>
        <authorList>
            <person name="Galeano F."/>
            <person name="Leroy A."/>
            <person name="Rossetti C."/>
            <person name="Gromova I."/>
            <person name="Gautier P."/>
            <person name="Keegan L.P."/>
            <person name="Massimi L."/>
            <person name="Di Rocco C."/>
            <person name="O'Connell M.A."/>
            <person name="Gallo A."/>
        </authorList>
    </citation>
    <scope>RNA EDITING OF POSITIONS 2; 5 AND 15</scope>
    <scope>TISSUE SPECIFICITY</scope>
</reference>
<reference key="8">
    <citation type="journal article" date="2010" name="Mol. Cell. Proteomics">
        <title>Bladder cancer-associated protein, a potential prognostic biomarker in human bladder cancer.</title>
        <authorList>
            <person name="Moreira J.M."/>
            <person name="Ohlsson G."/>
            <person name="Gromov P."/>
            <person name="Simon R."/>
            <person name="Sauter G."/>
            <person name="Celis J.E."/>
            <person name="Gromova I."/>
        </authorList>
    </citation>
    <scope>SUBCELLULAR LOCATION</scope>
    <scope>TISSUE SPECIFICITY</scope>
</reference>
<reference key="9">
    <citation type="journal article" date="2011" name="Exp. Biol. Med. (Maywood)">
        <title>BLCAP induces apoptosis in human Ewing's sarcoma cells.</title>
        <authorList>
            <person name="Fan D.G."/>
            <person name="Zhao F."/>
            <person name="Ding Y."/>
            <person name="Wu M.M."/>
            <person name="Fan Q.Y."/>
            <person name="Shimizu K."/>
            <person name="Dohjima T."/>
            <person name="Nozawa S."/>
            <person name="Wakahara K."/>
            <person name="Ohno T."/>
            <person name="Guo Y.S."/>
            <person name="Ma B.A."/>
            <person name="Jiang J.L."/>
        </authorList>
    </citation>
    <scope>FUNCTION</scope>
</reference>
<reference key="10">
    <citation type="journal article" date="2012" name="Exp. Ther. Med.">
        <title>Bladder cancer-associated protein is suppressed in human cervical tumors.</title>
        <authorList>
            <person name="Peng M."/>
            <person name="Xie T."/>
            <person name="Yu J."/>
            <person name="Xu B."/>
            <person name="Song Q."/>
            <person name="Wu X."/>
        </authorList>
    </citation>
    <scope>SUBCELLULAR LOCATION</scope>
    <scope>TISSUE SPECIFICITY</scope>
</reference>
<reference key="11">
    <citation type="journal article" date="2016" name="Oncol. Rep.">
        <title>BLCAP arrests G(1)/S checkpoint and induces apoptosis through downregulation of pRb1 in HeLa cells.</title>
        <authorList>
            <person name="Zhao M."/>
            <person name="Zhang L."/>
            <person name="Qiu X."/>
            <person name="Zeng F."/>
            <person name="Chen W."/>
            <person name="An Y."/>
            <person name="Hu B."/>
            <person name="Wu X."/>
            <person name="Wu X."/>
        </authorList>
    </citation>
    <scope>FUNCTION</scope>
    <scope>INTERACTION WITH RB1</scope>
    <scope>MUTAGENESIS OF 16-PRO--PRO-19; PRO-74 AND SER-78</scope>
</reference>
<reference key="12">
    <citation type="journal article" date="2017" name="PLoS ONE">
        <title>Identification of BLCAP as a novel STAT3 interaction partner in bladder cancer.</title>
        <authorList>
            <person name="Gromova I."/>
            <person name="Svensson S."/>
            <person name="Gromov P."/>
            <person name="Moreira J.M.A."/>
        </authorList>
    </citation>
    <scope>INTERACTION WITH STAT3</scope>
    <scope>SUBCELLULAR LOCATION</scope>
    <scope>TISSUE SPECIFICITY</scope>
</reference>
<name>BLCAP_HUMAN</name>
<feature type="chain" id="PRO_0000064850" description="Apoptosis inducing factor BLCAP">
    <location>
        <begin position="1"/>
        <end position="87"/>
    </location>
</feature>
<feature type="transmembrane region" description="Helical" evidence="1">
    <location>
        <begin position="19"/>
        <end position="39"/>
    </location>
</feature>
<feature type="transmembrane region" description="Helical" evidence="1">
    <location>
        <begin position="43"/>
        <end position="63"/>
    </location>
</feature>
<feature type="sequence variant" id="VAR_068908" description="In RNA edited version; dbSNP:rs11557677.">
    <original>Y</original>
    <variation>C</variation>
    <location>
        <position position="2"/>
    </location>
</feature>
<feature type="sequence variant" id="VAR_068909" description="In RNA edited version.">
    <original>Q</original>
    <variation>R</variation>
    <location>
        <position position="5"/>
    </location>
</feature>
<feature type="sequence variant" id="VAR_068910" description="In RNA edited version; dbSNP:rs11557676.">
    <original>K</original>
    <variation>R</variation>
    <location>
        <position position="15"/>
    </location>
</feature>
<feature type="mutagenesis site" description="No significant effect on activity." evidence="10">
    <original>PLNP</original>
    <variation>ALNA</variation>
    <location>
        <begin position="16"/>
        <end position="19"/>
    </location>
</feature>
<feature type="mutagenesis site" description="Reduces activity." evidence="10">
    <original>P</original>
    <variation>A</variation>
    <location>
        <position position="74"/>
    </location>
</feature>
<feature type="mutagenesis site" description="No significant effect on activity." evidence="10">
    <original>S</original>
    <variation>A</variation>
    <location>
        <position position="78"/>
    </location>
</feature>
<protein>
    <recommendedName>
        <fullName evidence="14">Apoptosis inducing factor BLCAP</fullName>
    </recommendedName>
    <alternativeName>
        <fullName>Bladder cancer 10 kDa protein</fullName>
        <shortName evidence="12 13">Bc10</shortName>
    </alternativeName>
    <alternativeName>
        <fullName>Bladder cancer-associated protein</fullName>
    </alternativeName>
</protein>
<accession>P62952</accession>
<accession>A2A2K7</accession>
<accession>O60629</accession>
<accession>Q9D3B5</accession>
<keyword id="KW-0053">Apoptosis</keyword>
<keyword id="KW-0131">Cell cycle</keyword>
<keyword id="KW-0963">Cytoplasm</keyword>
<keyword id="KW-0472">Membrane</keyword>
<keyword id="KW-0539">Nucleus</keyword>
<keyword id="KW-1185">Reference proteome</keyword>
<keyword id="KW-0691">RNA editing</keyword>
<keyword id="KW-0812">Transmembrane</keyword>
<keyword id="KW-1133">Transmembrane helix</keyword>
<keyword id="KW-0043">Tumor suppressor</keyword>
<comment type="function">
    <text evidence="4 5 8 10">Acts as a tumor suppressor; induces growth arrest at G(1)/S checkpoint and apoptosis via RB1-dependent and p53/TP53- and NF-kappa-B-independent mechanisms (PubMed:16675915, PubMed:17031575, PubMed:21844121, PubMed:26986503). Modulates expression of genes involved in the regulation of proliferation, cell cycle and apoptosis (PubMed:17031575, PubMed:21844121, PubMed:26986503).</text>
</comment>
<comment type="subunit">
    <text evidence="10 11">Interacts with RB1 (phosphorylated and unphosphorylated) (PubMed:26986503). Interacts with STAT3; the interaction is promoted by cell stimulation with IL6 and phosphorylation of STAT3 (PubMed:29190807).</text>
</comment>
<comment type="interaction">
    <interactant intactId="EBI-3895726">
        <id>P62952</id>
    </interactant>
    <interactant intactId="EBI-1172335">
        <id>P07306</id>
        <label>ASGR1</label>
    </interactant>
    <organismsDiffer>false</organismsDiffer>
    <experiments>3</experiments>
</comment>
<comment type="interaction">
    <interactant intactId="EBI-3895726">
        <id>P62952</id>
    </interactant>
    <interactant intactId="EBI-11959453">
        <id>Q8NHS1</id>
        <label>CLDND2</label>
    </interactant>
    <organismsDiffer>false</organismsDiffer>
    <experiments>3</experiments>
</comment>
<comment type="interaction">
    <interactant intactId="EBI-3895726">
        <id>P62952</id>
    </interactant>
    <interactant intactId="EBI-3867333">
        <id>A8MQ03</id>
        <label>CYSRT1</label>
    </interactant>
    <organismsDiffer>false</organismsDiffer>
    <experiments>3</experiments>
</comment>
<comment type="interaction">
    <interactant intactId="EBI-3895726">
        <id>P62952</id>
    </interactant>
    <interactant intactId="EBI-78473">
        <id>P03372</id>
        <label>ESR1</label>
    </interactant>
    <organismsDiffer>false</organismsDiffer>
    <experiments>2</experiments>
</comment>
<comment type="interaction">
    <interactant intactId="EBI-3895726">
        <id>P62952</id>
    </interactant>
    <interactant intactId="EBI-12118888">
        <id>Q96D05-2</id>
        <label>FAM241B</label>
    </interactant>
    <organismsDiffer>false</organismsDiffer>
    <experiments>3</experiments>
</comment>
<comment type="interaction">
    <interactant intactId="EBI-3895726">
        <id>P62952</id>
    </interactant>
    <interactant intactId="EBI-11991950">
        <id>Q8WWP7</id>
        <label>GIMAP1</label>
    </interactant>
    <organismsDiffer>false</organismsDiffer>
    <experiments>3</experiments>
</comment>
<comment type="interaction">
    <interactant intactId="EBI-3895726">
        <id>P62952</id>
    </interactant>
    <interactant intactId="EBI-750433">
        <id>P36382</id>
        <label>GJA5</label>
    </interactant>
    <organismsDiffer>false</organismsDiffer>
    <experiments>3</experiments>
</comment>
<comment type="interaction">
    <interactant intactId="EBI-3895726">
        <id>P62952</id>
    </interactant>
    <interactant intactId="EBI-4401517">
        <id>O14653</id>
        <label>GOSR2</label>
    </interactant>
    <organismsDiffer>false</organismsDiffer>
    <experiments>3</experiments>
</comment>
<comment type="interaction">
    <interactant intactId="EBI-3895726">
        <id>P62952</id>
    </interactant>
    <interactant intactId="EBI-740785">
        <id>P49639</id>
        <label>HOXA1</label>
    </interactant>
    <organismsDiffer>false</organismsDiffer>
    <experiments>3</experiments>
</comment>
<comment type="interaction">
    <interactant intactId="EBI-3895726">
        <id>P62952</id>
    </interactant>
    <interactant intactId="EBI-12268900">
        <id>Q68G75</id>
        <label>LEMD1</label>
    </interactant>
    <organismsDiffer>false</organismsDiffer>
    <experiments>3</experiments>
</comment>
<comment type="interaction">
    <interactant intactId="EBI-3895726">
        <id>P62952</id>
    </interactant>
    <interactant intactId="EBI-13291307">
        <id>O95237</id>
        <label>LRAT</label>
    </interactant>
    <organismsDiffer>false</organismsDiffer>
    <experiments>3</experiments>
</comment>
<comment type="interaction">
    <interactant intactId="EBI-3895726">
        <id>P62952</id>
    </interactant>
    <interactant intactId="EBI-3920969">
        <id>Q6N075</id>
        <label>MFSD5</label>
    </interactant>
    <organismsDiffer>false</organismsDiffer>
    <experiments>3</experiments>
</comment>
<comment type="interaction">
    <interactant intactId="EBI-3895726">
        <id>P62952</id>
    </interactant>
    <interactant intactId="EBI-945833">
        <id>Q7Z3S9</id>
        <label>NOTCH2NLA</label>
    </interactant>
    <organismsDiffer>false</organismsDiffer>
    <experiments>4</experiments>
</comment>
<comment type="interaction">
    <interactant intactId="EBI-3895726">
        <id>P62952</id>
    </interactant>
    <interactant intactId="EBI-2477305">
        <id>Q86WV1</id>
        <label>SKAP1</label>
    </interactant>
    <organismsDiffer>false</organismsDiffer>
    <experiments>3</experiments>
</comment>
<comment type="interaction">
    <interactant intactId="EBI-3895726">
        <id>P62952</id>
    </interactant>
    <interactant intactId="EBI-17280858">
        <id>Q8WWF3</id>
        <label>SSMEM1</label>
    </interactant>
    <organismsDiffer>false</organismsDiffer>
    <experiments>3</experiments>
</comment>
<comment type="interaction">
    <interactant intactId="EBI-3895726">
        <id>P62952</id>
    </interactant>
    <interactant intactId="EBI-8638294">
        <id>Q9NUH8</id>
        <label>TMEM14B</label>
    </interactant>
    <organismsDiffer>false</organismsDiffer>
    <experiments>3</experiments>
</comment>
<comment type="interaction">
    <interactant intactId="EBI-3895726">
        <id>P62952</id>
    </interactant>
    <interactant intactId="EBI-10982110">
        <id>Q96Q45-2</id>
        <label>TMEM237</label>
    </interactant>
    <organismsDiffer>false</organismsDiffer>
    <experiments>3</experiments>
</comment>
<comment type="subcellular location">
    <subcellularLocation>
        <location evidence="6 9 11">Cytoplasm</location>
    </subcellularLocation>
    <subcellularLocation>
        <location evidence="6 11">Nucleus</location>
    </subcellularLocation>
    <subcellularLocation>
        <location evidence="1">Membrane</location>
        <topology evidence="1">Multi-pass membrane protein</topology>
    </subcellularLocation>
</comment>
<comment type="tissue specificity">
    <text evidence="3 4 6 7 9 11">Cervical tissues (at protein level) (PubMed:22969892). Urothelium (at protein level) (PubMed:19783793, PubMed:29190807). Endothelial cells of urinary bladder vessels (at protein level) (PubMed:19783793). Urinary bladder stromal cells (at protein level) (PubMed:19783793). Cervical tissues (PubMed:16675915). Kidney (PubMed:11072240). Ubiquitous (PubMed:19908260).</text>
</comment>
<comment type="RNA editing">
    <location>
        <position position="2" evidence="7"/>
    </location>
    <location>
        <position position="5" evidence="7"/>
    </location>
    <location>
        <position position="15" evidence="7"/>
    </location>
    <text evidence="7">Partially edited. Decreased editing levels seen in astrocytomas, bladder cancer and colorectal cancer as compared to the related normal tissues.</text>
</comment>
<comment type="miscellaneous">
    <text evidence="2 3 4 6 7 9">Down-regulated in cervical carcinoma tissues (PubMed:16675915, PubMed:22969892). Expression in stage III-IV cervical carcinomas is significantly lower compared to stage I-II (PubMed:22969892). Down-regulated in bladder carcinoma (PubMed:10197429, PubMed:19783793). Down-regulated in renal cell carcinoma (PubMed:11072240). Down-regulated in colorectal cancerous tissues (PubMed:19908260).</text>
</comment>
<comment type="similarity">
    <text evidence="14">Belongs to the BLCAP family.</text>
</comment>
<comment type="online information" name="Atlas of Genetics and Cytogenetics in Oncology and Haematology">
    <link uri="https://atlasgeneticsoncology.org/gene/801/BLCAP"/>
</comment>
<sequence length="87" mass="9876">MYCLQWLLPVLLIPKPLNPALWFSHSMFMGFYLLSFLLERKPCTICALVFLAALFLICYSCWGNCFLYHCSDSPLPESAHDPGVVGT</sequence>
<evidence type="ECO:0000255" key="1"/>
<evidence type="ECO:0000269" key="2">
    <source>
    </source>
</evidence>
<evidence type="ECO:0000269" key="3">
    <source>
    </source>
</evidence>
<evidence type="ECO:0000269" key="4">
    <source>
    </source>
</evidence>
<evidence type="ECO:0000269" key="5">
    <source>
    </source>
</evidence>
<evidence type="ECO:0000269" key="6">
    <source>
    </source>
</evidence>
<evidence type="ECO:0000269" key="7">
    <source>
    </source>
</evidence>
<evidence type="ECO:0000269" key="8">
    <source>
    </source>
</evidence>
<evidence type="ECO:0000269" key="9">
    <source>
    </source>
</evidence>
<evidence type="ECO:0000269" key="10">
    <source>
    </source>
</evidence>
<evidence type="ECO:0000269" key="11">
    <source>
    </source>
</evidence>
<evidence type="ECO:0000303" key="12">
    <source>
    </source>
</evidence>
<evidence type="ECO:0000303" key="13">
    <source>
    </source>
</evidence>
<evidence type="ECO:0000305" key="14"/>
<gene>
    <name type="primary">BLCAP</name>
    <name type="synonym">BC10</name>
</gene>
<dbReference type="EMBL" id="AF053470">
    <property type="protein sequence ID" value="AAC06370.1"/>
    <property type="molecule type" value="mRNA"/>
</dbReference>
<dbReference type="EMBL" id="AL109614">
    <property type="status" value="NOT_ANNOTATED_CDS"/>
    <property type="molecule type" value="Genomic_DNA"/>
</dbReference>
<dbReference type="EMBL" id="BC047692">
    <property type="protein sequence ID" value="AAH47692.1"/>
    <property type="molecule type" value="mRNA"/>
</dbReference>
<dbReference type="EMBL" id="BC071704">
    <property type="protein sequence ID" value="AAH71704.1"/>
    <property type="molecule type" value="mRNA"/>
</dbReference>
<dbReference type="CCDS" id="CCDS13295.1"/>
<dbReference type="RefSeq" id="NP_001161292.1">
    <property type="nucleotide sequence ID" value="NM_001167820.2"/>
</dbReference>
<dbReference type="RefSeq" id="NP_001161293.1">
    <property type="nucleotide sequence ID" value="NM_001167821.2"/>
</dbReference>
<dbReference type="RefSeq" id="NP_001161294.1">
    <property type="nucleotide sequence ID" value="NM_001167822.3"/>
</dbReference>
<dbReference type="RefSeq" id="NP_001161295.1">
    <property type="nucleotide sequence ID" value="NM_001167823.2"/>
</dbReference>
<dbReference type="RefSeq" id="NP_001304003.1">
    <property type="nucleotide sequence ID" value="NM_001317074.2"/>
</dbReference>
<dbReference type="RefSeq" id="NP_001304004.1">
    <property type="nucleotide sequence ID" value="NM_001317075.2"/>
</dbReference>
<dbReference type="RefSeq" id="NP_006689.1">
    <property type="nucleotide sequence ID" value="NM_006698.4"/>
</dbReference>
<dbReference type="RefSeq" id="XP_016883088.1">
    <property type="nucleotide sequence ID" value="XM_017027599.1"/>
</dbReference>
<dbReference type="BioGRID" id="116110">
    <property type="interactions" value="22"/>
</dbReference>
<dbReference type="FunCoup" id="P62952">
    <property type="interactions" value="654"/>
</dbReference>
<dbReference type="IntAct" id="P62952">
    <property type="interactions" value="17"/>
</dbReference>
<dbReference type="STRING" id="9606.ENSP00000397172"/>
<dbReference type="BioMuta" id="BLCAP"/>
<dbReference type="DMDM" id="51702217"/>
<dbReference type="PaxDb" id="9606-ENSP00000397172"/>
<dbReference type="PeptideAtlas" id="P62952"/>
<dbReference type="Antibodypedia" id="57254">
    <property type="antibodies" value="44 antibodies from 20 providers"/>
</dbReference>
<dbReference type="DNASU" id="10904"/>
<dbReference type="Ensembl" id="ENST00000373537.7">
    <property type="protein sequence ID" value="ENSP00000362637.2"/>
    <property type="gene ID" value="ENSG00000166619.15"/>
</dbReference>
<dbReference type="Ensembl" id="ENST00000397131.1">
    <property type="protein sequence ID" value="ENSP00000380320.1"/>
    <property type="gene ID" value="ENSG00000166619.15"/>
</dbReference>
<dbReference type="Ensembl" id="ENST00000397134.1">
    <property type="protein sequence ID" value="ENSP00000380323.1"/>
    <property type="gene ID" value="ENSG00000166619.15"/>
</dbReference>
<dbReference type="Ensembl" id="ENST00000397135.1">
    <property type="protein sequence ID" value="ENSP00000380324.1"/>
    <property type="gene ID" value="ENSG00000166619.15"/>
</dbReference>
<dbReference type="Ensembl" id="ENST00000397137.5">
    <property type="protein sequence ID" value="ENSP00000380326.1"/>
    <property type="gene ID" value="ENSG00000166619.15"/>
</dbReference>
<dbReference type="Ensembl" id="ENST00000414542.6">
    <property type="protein sequence ID" value="ENSP00000397172.2"/>
    <property type="gene ID" value="ENSG00000166619.15"/>
</dbReference>
<dbReference type="Ensembl" id="ENST00000432507.1">
    <property type="protein sequence ID" value="ENSP00000414973.1"/>
    <property type="gene ID" value="ENSG00000166619.15"/>
</dbReference>
<dbReference type="GeneID" id="10904"/>
<dbReference type="KEGG" id="hsa:10904"/>
<dbReference type="MANE-Select" id="ENST00000373537.7">
    <property type="protein sequence ID" value="ENSP00000362637.2"/>
    <property type="RefSeq nucleotide sequence ID" value="NM_006698.4"/>
    <property type="RefSeq protein sequence ID" value="NP_006689.1"/>
</dbReference>
<dbReference type="UCSC" id="uc002xha.4">
    <property type="organism name" value="human"/>
</dbReference>
<dbReference type="AGR" id="HGNC:1055"/>
<dbReference type="CTD" id="10904"/>
<dbReference type="DisGeNET" id="10904"/>
<dbReference type="GeneCards" id="BLCAP"/>
<dbReference type="HGNC" id="HGNC:1055">
    <property type="gene designation" value="BLCAP"/>
</dbReference>
<dbReference type="HPA" id="ENSG00000166619">
    <property type="expression patterns" value="Tissue enhanced (skeletal)"/>
</dbReference>
<dbReference type="MIM" id="613110">
    <property type="type" value="gene"/>
</dbReference>
<dbReference type="neXtProt" id="NX_P62952"/>
<dbReference type="OpenTargets" id="ENSG00000166619"/>
<dbReference type="PharmGKB" id="PA25367"/>
<dbReference type="VEuPathDB" id="HostDB:ENSG00000166619"/>
<dbReference type="eggNOG" id="KOG4489">
    <property type="taxonomic scope" value="Eukaryota"/>
</dbReference>
<dbReference type="GeneTree" id="ENSGT00390000014105"/>
<dbReference type="InParanoid" id="P62952"/>
<dbReference type="OMA" id="FLLCYSC"/>
<dbReference type="OrthoDB" id="5772623at2759"/>
<dbReference type="PAN-GO" id="P62952">
    <property type="GO annotations" value="0 GO annotations based on evolutionary models"/>
</dbReference>
<dbReference type="PhylomeDB" id="P62952"/>
<dbReference type="TreeFam" id="TF313306"/>
<dbReference type="PathwayCommons" id="P62952"/>
<dbReference type="SignaLink" id="P62952"/>
<dbReference type="BioGRID-ORCS" id="10904">
    <property type="hits" value="26 hits in 1164 CRISPR screens"/>
</dbReference>
<dbReference type="ChiTaRS" id="BLCAP">
    <property type="organism name" value="human"/>
</dbReference>
<dbReference type="GeneWiki" id="BLCAP"/>
<dbReference type="GenomeRNAi" id="10904"/>
<dbReference type="Pharos" id="P62952">
    <property type="development level" value="Tbio"/>
</dbReference>
<dbReference type="PRO" id="PR:P62952"/>
<dbReference type="Proteomes" id="UP000005640">
    <property type="component" value="Chromosome 20"/>
</dbReference>
<dbReference type="RNAct" id="P62952">
    <property type="molecule type" value="protein"/>
</dbReference>
<dbReference type="Bgee" id="ENSG00000166619">
    <property type="expression patterns" value="Expressed in secondary oocyte and 209 other cell types or tissues"/>
</dbReference>
<dbReference type="ExpressionAtlas" id="P62952">
    <property type="expression patterns" value="baseline and differential"/>
</dbReference>
<dbReference type="GO" id="GO:0005737">
    <property type="term" value="C:cytoplasm"/>
    <property type="evidence" value="ECO:0007669"/>
    <property type="project" value="UniProtKB-SubCell"/>
</dbReference>
<dbReference type="GO" id="GO:0016020">
    <property type="term" value="C:membrane"/>
    <property type="evidence" value="ECO:0007669"/>
    <property type="project" value="UniProtKB-SubCell"/>
</dbReference>
<dbReference type="GO" id="GO:0005634">
    <property type="term" value="C:nucleus"/>
    <property type="evidence" value="ECO:0007669"/>
    <property type="project" value="UniProtKB-SubCell"/>
</dbReference>
<dbReference type="GO" id="GO:0030262">
    <property type="term" value="P:apoptotic nuclear changes"/>
    <property type="evidence" value="ECO:0000314"/>
    <property type="project" value="UniProtKB"/>
</dbReference>
<dbReference type="InterPro" id="IPR009598">
    <property type="entry name" value="BCALP"/>
</dbReference>
<dbReference type="PANTHER" id="PTHR13259">
    <property type="entry name" value="BLADDER CANCER 10 KD PROTEIN HOMOLOG"/>
    <property type="match status" value="1"/>
</dbReference>
<dbReference type="PANTHER" id="PTHR13259:SF1">
    <property type="entry name" value="BLADDER CANCER-ASSOCIATED PROTEIN"/>
    <property type="match status" value="1"/>
</dbReference>
<dbReference type="Pfam" id="PF06726">
    <property type="entry name" value="BC10"/>
    <property type="match status" value="1"/>
</dbReference>
<dbReference type="SMART" id="SM01396">
    <property type="entry name" value="BC10"/>
    <property type="match status" value="1"/>
</dbReference>
<proteinExistence type="evidence at protein level"/>